<dbReference type="EC" id="2.5.1.-" evidence="1"/>
<dbReference type="EMBL" id="CP000680">
    <property type="protein sequence ID" value="ABP84246.1"/>
    <property type="molecule type" value="Genomic_DNA"/>
</dbReference>
<dbReference type="SMR" id="A4XSD0"/>
<dbReference type="STRING" id="399739.Pmen_1481"/>
<dbReference type="KEGG" id="pmy:Pmen_1481"/>
<dbReference type="PATRIC" id="fig|399739.8.peg.1503"/>
<dbReference type="eggNOG" id="COG0500">
    <property type="taxonomic scope" value="Bacteria"/>
</dbReference>
<dbReference type="HOGENOM" id="CLU_052665_0_0_6"/>
<dbReference type="OrthoDB" id="9773188at2"/>
<dbReference type="GO" id="GO:0008168">
    <property type="term" value="F:methyltransferase activity"/>
    <property type="evidence" value="ECO:0007669"/>
    <property type="project" value="TreeGrafter"/>
</dbReference>
<dbReference type="GO" id="GO:0016765">
    <property type="term" value="F:transferase activity, transferring alkyl or aryl (other than methyl) groups"/>
    <property type="evidence" value="ECO:0007669"/>
    <property type="project" value="UniProtKB-UniRule"/>
</dbReference>
<dbReference type="GO" id="GO:0002098">
    <property type="term" value="P:tRNA wobble uridine modification"/>
    <property type="evidence" value="ECO:0007669"/>
    <property type="project" value="InterPro"/>
</dbReference>
<dbReference type="CDD" id="cd02440">
    <property type="entry name" value="AdoMet_MTases"/>
    <property type="match status" value="1"/>
</dbReference>
<dbReference type="Gene3D" id="3.40.50.150">
    <property type="entry name" value="Vaccinia Virus protein VP39"/>
    <property type="match status" value="1"/>
</dbReference>
<dbReference type="HAMAP" id="MF_01590">
    <property type="entry name" value="tRNA_carboxymethyltr_CmoB"/>
    <property type="match status" value="1"/>
</dbReference>
<dbReference type="InterPro" id="IPR010017">
    <property type="entry name" value="CmoB"/>
</dbReference>
<dbReference type="InterPro" id="IPR027555">
    <property type="entry name" value="Mo5U34_MeTrfas-like"/>
</dbReference>
<dbReference type="InterPro" id="IPR029063">
    <property type="entry name" value="SAM-dependent_MTases_sf"/>
</dbReference>
<dbReference type="NCBIfam" id="NF011650">
    <property type="entry name" value="PRK15068.1"/>
    <property type="match status" value="1"/>
</dbReference>
<dbReference type="NCBIfam" id="TIGR00452">
    <property type="entry name" value="tRNA 5-methoxyuridine(34)/uridine 5-oxyacetic acid(34) synthase CmoB"/>
    <property type="match status" value="1"/>
</dbReference>
<dbReference type="PANTHER" id="PTHR43464">
    <property type="entry name" value="METHYLTRANSFERASE"/>
    <property type="match status" value="1"/>
</dbReference>
<dbReference type="PANTHER" id="PTHR43464:SF95">
    <property type="entry name" value="TRNA U34 CARBOXYMETHYLTRANSFERASE"/>
    <property type="match status" value="1"/>
</dbReference>
<dbReference type="Pfam" id="PF08003">
    <property type="entry name" value="Methyltransf_9"/>
    <property type="match status" value="1"/>
</dbReference>
<dbReference type="SUPFAM" id="SSF53335">
    <property type="entry name" value="S-adenosyl-L-methionine-dependent methyltransferases"/>
    <property type="match status" value="1"/>
</dbReference>
<evidence type="ECO:0000255" key="1">
    <source>
        <dbReference type="HAMAP-Rule" id="MF_01590"/>
    </source>
</evidence>
<keyword id="KW-0808">Transferase</keyword>
<keyword id="KW-0819">tRNA processing</keyword>
<organism>
    <name type="scientific">Ectopseudomonas mendocina (strain ymp)</name>
    <name type="common">Pseudomonas mendocina</name>
    <dbReference type="NCBI Taxonomy" id="399739"/>
    <lineage>
        <taxon>Bacteria</taxon>
        <taxon>Pseudomonadati</taxon>
        <taxon>Pseudomonadota</taxon>
        <taxon>Gammaproteobacteria</taxon>
        <taxon>Pseudomonadales</taxon>
        <taxon>Pseudomonadaceae</taxon>
        <taxon>Ectopseudomonas</taxon>
    </lineage>
</organism>
<name>CMOB_ECTM1</name>
<accession>A4XSD0</accession>
<gene>
    <name evidence="1" type="primary">cmoB</name>
    <name type="ordered locus">Pmen_1481</name>
</gene>
<proteinExistence type="inferred from homology"/>
<comment type="function">
    <text evidence="1">Catalyzes carboxymethyl transfer from carboxy-S-adenosyl-L-methionine (Cx-SAM) to 5-hydroxyuridine (ho5U) to form 5-carboxymethoxyuridine (cmo5U) at position 34 in tRNAs.</text>
</comment>
<comment type="catalytic activity">
    <reaction evidence="1">
        <text>carboxy-S-adenosyl-L-methionine + 5-hydroxyuridine(34) in tRNA = 5-carboxymethoxyuridine(34) in tRNA + S-adenosyl-L-homocysteine + H(+)</text>
        <dbReference type="Rhea" id="RHEA:52848"/>
        <dbReference type="Rhea" id="RHEA-COMP:13381"/>
        <dbReference type="Rhea" id="RHEA-COMP:13383"/>
        <dbReference type="ChEBI" id="CHEBI:15378"/>
        <dbReference type="ChEBI" id="CHEBI:57856"/>
        <dbReference type="ChEBI" id="CHEBI:134278"/>
        <dbReference type="ChEBI" id="CHEBI:136877"/>
        <dbReference type="ChEBI" id="CHEBI:136879"/>
    </reaction>
</comment>
<comment type="subunit">
    <text evidence="1">Homotetramer.</text>
</comment>
<comment type="similarity">
    <text evidence="1">Belongs to the class I-like SAM-binding methyltransferase superfamily. CmoB family.</text>
</comment>
<feature type="chain" id="PRO_1000069331" description="tRNA U34 carboxymethyltransferase">
    <location>
        <begin position="1"/>
        <end position="322"/>
    </location>
</feature>
<feature type="binding site" evidence="1">
    <location>
        <position position="91"/>
    </location>
    <ligand>
        <name>carboxy-S-adenosyl-L-methionine</name>
        <dbReference type="ChEBI" id="CHEBI:134278"/>
    </ligand>
</feature>
<feature type="binding site" evidence="1">
    <location>
        <position position="105"/>
    </location>
    <ligand>
        <name>carboxy-S-adenosyl-L-methionine</name>
        <dbReference type="ChEBI" id="CHEBI:134278"/>
    </ligand>
</feature>
<feature type="binding site" evidence="1">
    <location>
        <position position="110"/>
    </location>
    <ligand>
        <name>carboxy-S-adenosyl-L-methionine</name>
        <dbReference type="ChEBI" id="CHEBI:134278"/>
    </ligand>
</feature>
<feature type="binding site" evidence="1">
    <location>
        <position position="129"/>
    </location>
    <ligand>
        <name>carboxy-S-adenosyl-L-methionine</name>
        <dbReference type="ChEBI" id="CHEBI:134278"/>
    </ligand>
</feature>
<feature type="binding site" evidence="1">
    <location>
        <position position="195"/>
    </location>
    <ligand>
        <name>carboxy-S-adenosyl-L-methionine</name>
        <dbReference type="ChEBI" id="CHEBI:134278"/>
    </ligand>
</feature>
<feature type="binding site" evidence="1">
    <location>
        <position position="199"/>
    </location>
    <ligand>
        <name>carboxy-S-adenosyl-L-methionine</name>
        <dbReference type="ChEBI" id="CHEBI:134278"/>
    </ligand>
</feature>
<feature type="binding site" evidence="1">
    <location>
        <position position="314"/>
    </location>
    <ligand>
        <name>carboxy-S-adenosyl-L-methionine</name>
        <dbReference type="ChEBI" id="CHEBI:134278"/>
    </ligand>
</feature>
<reference key="1">
    <citation type="submission" date="2007-04" db="EMBL/GenBank/DDBJ databases">
        <title>Complete sequence of Pseudomonas mendocina ymp.</title>
        <authorList>
            <consortium name="US DOE Joint Genome Institute"/>
            <person name="Copeland A."/>
            <person name="Lucas S."/>
            <person name="Lapidus A."/>
            <person name="Barry K."/>
            <person name="Glavina del Rio T."/>
            <person name="Dalin E."/>
            <person name="Tice H."/>
            <person name="Pitluck S."/>
            <person name="Kiss H."/>
            <person name="Brettin T."/>
            <person name="Detter J.C."/>
            <person name="Bruce D."/>
            <person name="Han C."/>
            <person name="Schmutz J."/>
            <person name="Larimer F."/>
            <person name="Land M."/>
            <person name="Hauser L."/>
            <person name="Kyrpides N."/>
            <person name="Mikhailova N."/>
            <person name="Hersman L."/>
            <person name="Dubois J."/>
            <person name="Maurice P."/>
            <person name="Richardson P."/>
        </authorList>
    </citation>
    <scope>NUCLEOTIDE SEQUENCE [LARGE SCALE GENOMIC DNA]</scope>
    <source>
        <strain>ymp</strain>
    </source>
</reference>
<protein>
    <recommendedName>
        <fullName evidence="1">tRNA U34 carboxymethyltransferase</fullName>
        <ecNumber evidence="1">2.5.1.-</ecNumber>
    </recommendedName>
</protein>
<sequence>MMRDLDLDALQAQLAGTPLQEWACELPGQLDAKLAIGHGDLARWYGAVQALPALPVSEVELARRFAFGGACDDASRAQLKTALQGLIPWRKGPFELFGVHIDTEWRSDWKWQRVAPHLDLTGKRILDVGCGNGYYMWRMLGAGAGSVVGIDPNWLFLCQFLAMKRYLPEQPVWHLPLAFEELPAKLQGFDTVFSMGVLYHRRSPIDHLLDLKDALVKGGELVLETLVVEGDAEQVLVPEDRYAQMRNVWFLPSVPALERWLRRAGFEDVRCVDVSTTSVDEQRATEWMRFQSLPEFLDPADHSRTVEGLPAPTRAVLIARKP</sequence>